<keyword id="KW-0378">Hydrolase</keyword>
<keyword id="KW-0408">Iron</keyword>
<keyword id="KW-0479">Metal-binding</keyword>
<keyword id="KW-0648">Protein biosynthesis</keyword>
<organism>
    <name type="scientific">Listeria welshimeri serovar 6b (strain ATCC 35897 / DSM 20650 / CCUG 15529 / CIP 8149 / NCTC 11857 / SLCC 5334 / V8)</name>
    <dbReference type="NCBI Taxonomy" id="386043"/>
    <lineage>
        <taxon>Bacteria</taxon>
        <taxon>Bacillati</taxon>
        <taxon>Bacillota</taxon>
        <taxon>Bacilli</taxon>
        <taxon>Bacillales</taxon>
        <taxon>Listeriaceae</taxon>
        <taxon>Listeria</taxon>
    </lineage>
</organism>
<comment type="function">
    <text evidence="1">Removes the formyl group from the N-terminal Met of newly synthesized proteins. Requires at least a dipeptide for an efficient rate of reaction. N-terminal L-methionine is a prerequisite for activity but the enzyme has broad specificity at other positions.</text>
</comment>
<comment type="catalytic activity">
    <reaction evidence="1">
        <text>N-terminal N-formyl-L-methionyl-[peptide] + H2O = N-terminal L-methionyl-[peptide] + formate</text>
        <dbReference type="Rhea" id="RHEA:24420"/>
        <dbReference type="Rhea" id="RHEA-COMP:10639"/>
        <dbReference type="Rhea" id="RHEA-COMP:10640"/>
        <dbReference type="ChEBI" id="CHEBI:15377"/>
        <dbReference type="ChEBI" id="CHEBI:15740"/>
        <dbReference type="ChEBI" id="CHEBI:49298"/>
        <dbReference type="ChEBI" id="CHEBI:64731"/>
        <dbReference type="EC" id="3.5.1.88"/>
    </reaction>
</comment>
<comment type="cofactor">
    <cofactor evidence="1">
        <name>Fe(2+)</name>
        <dbReference type="ChEBI" id="CHEBI:29033"/>
    </cofactor>
    <text evidence="1">Binds 1 Fe(2+) ion.</text>
</comment>
<comment type="similarity">
    <text evidence="1">Belongs to the polypeptide deformylase family.</text>
</comment>
<sequence>MLTMDDIVREGHPALREVASEVTFPLSDEEKKLGHDMLEFLINSQDEELAEKYGLRGGVGIAAPQLAVTKRILAIHVHDEKDRLYSYVLYNPKIRSHSVQQACLSGGEGCLSVDREVPGYVVRSERVTIDAFDENGIPLKLRFKDYPAIVVQHEIDHLNGIMFYDHINKENPSYLPPDVDVFG</sequence>
<dbReference type="EC" id="3.5.1.88" evidence="1"/>
<dbReference type="EMBL" id="AM263198">
    <property type="protein sequence ID" value="CAK20445.1"/>
    <property type="molecule type" value="Genomic_DNA"/>
</dbReference>
<dbReference type="RefSeq" id="WP_011701852.1">
    <property type="nucleotide sequence ID" value="NC_008555.1"/>
</dbReference>
<dbReference type="SMR" id="A0AHG3"/>
<dbReference type="STRING" id="386043.lwe1027"/>
<dbReference type="GeneID" id="61188917"/>
<dbReference type="KEGG" id="lwe:lwe1027"/>
<dbReference type="eggNOG" id="COG0242">
    <property type="taxonomic scope" value="Bacteria"/>
</dbReference>
<dbReference type="HOGENOM" id="CLU_061901_4_0_9"/>
<dbReference type="OrthoDB" id="9784988at2"/>
<dbReference type="Proteomes" id="UP000000779">
    <property type="component" value="Chromosome"/>
</dbReference>
<dbReference type="GO" id="GO:0046872">
    <property type="term" value="F:metal ion binding"/>
    <property type="evidence" value="ECO:0007669"/>
    <property type="project" value="UniProtKB-KW"/>
</dbReference>
<dbReference type="GO" id="GO:0042586">
    <property type="term" value="F:peptide deformylase activity"/>
    <property type="evidence" value="ECO:0007669"/>
    <property type="project" value="UniProtKB-UniRule"/>
</dbReference>
<dbReference type="GO" id="GO:0043686">
    <property type="term" value="P:co-translational protein modification"/>
    <property type="evidence" value="ECO:0007669"/>
    <property type="project" value="TreeGrafter"/>
</dbReference>
<dbReference type="GO" id="GO:0006412">
    <property type="term" value="P:translation"/>
    <property type="evidence" value="ECO:0007669"/>
    <property type="project" value="UniProtKB-UniRule"/>
</dbReference>
<dbReference type="CDD" id="cd00487">
    <property type="entry name" value="Pep_deformylase"/>
    <property type="match status" value="1"/>
</dbReference>
<dbReference type="FunFam" id="3.90.45.10:FF:000002">
    <property type="entry name" value="Peptide deformylase"/>
    <property type="match status" value="1"/>
</dbReference>
<dbReference type="Gene3D" id="3.90.45.10">
    <property type="entry name" value="Peptide deformylase"/>
    <property type="match status" value="1"/>
</dbReference>
<dbReference type="HAMAP" id="MF_00163">
    <property type="entry name" value="Pep_deformylase"/>
    <property type="match status" value="1"/>
</dbReference>
<dbReference type="InterPro" id="IPR023635">
    <property type="entry name" value="Peptide_deformylase"/>
</dbReference>
<dbReference type="InterPro" id="IPR036821">
    <property type="entry name" value="Peptide_deformylase_sf"/>
</dbReference>
<dbReference type="NCBIfam" id="TIGR00079">
    <property type="entry name" value="pept_deformyl"/>
    <property type="match status" value="1"/>
</dbReference>
<dbReference type="PANTHER" id="PTHR10458">
    <property type="entry name" value="PEPTIDE DEFORMYLASE"/>
    <property type="match status" value="1"/>
</dbReference>
<dbReference type="PANTHER" id="PTHR10458:SF8">
    <property type="entry name" value="PEPTIDE DEFORMYLASE 2"/>
    <property type="match status" value="1"/>
</dbReference>
<dbReference type="Pfam" id="PF01327">
    <property type="entry name" value="Pep_deformylase"/>
    <property type="match status" value="1"/>
</dbReference>
<dbReference type="PIRSF" id="PIRSF004749">
    <property type="entry name" value="Pep_def"/>
    <property type="match status" value="1"/>
</dbReference>
<dbReference type="PRINTS" id="PR01576">
    <property type="entry name" value="PDEFORMYLASE"/>
</dbReference>
<dbReference type="SUPFAM" id="SSF56420">
    <property type="entry name" value="Peptide deformylase"/>
    <property type="match status" value="1"/>
</dbReference>
<protein>
    <recommendedName>
        <fullName evidence="1">Peptide deformylase</fullName>
        <shortName evidence="1">PDF</shortName>
        <ecNumber evidence="1">3.5.1.88</ecNumber>
    </recommendedName>
    <alternativeName>
        <fullName evidence="1">Polypeptide deformylase</fullName>
    </alternativeName>
</protein>
<proteinExistence type="inferred from homology"/>
<gene>
    <name evidence="1" type="primary">def</name>
    <name type="ordered locus">lwe1027</name>
</gene>
<name>DEF_LISW6</name>
<accession>A0AHG3</accession>
<reference key="1">
    <citation type="journal article" date="2006" name="J. Bacteriol.">
        <title>Whole-genome sequence of Listeria welshimeri reveals common steps in genome reduction with Listeria innocua as compared to Listeria monocytogenes.</title>
        <authorList>
            <person name="Hain T."/>
            <person name="Steinweg C."/>
            <person name="Kuenne C.T."/>
            <person name="Billion A."/>
            <person name="Ghai R."/>
            <person name="Chatterjee S.S."/>
            <person name="Domann E."/>
            <person name="Kaerst U."/>
            <person name="Goesmann A."/>
            <person name="Bekel T."/>
            <person name="Bartels D."/>
            <person name="Kaiser O."/>
            <person name="Meyer F."/>
            <person name="Puehler A."/>
            <person name="Weisshaar B."/>
            <person name="Wehland J."/>
            <person name="Liang C."/>
            <person name="Dandekar T."/>
            <person name="Lampidis R."/>
            <person name="Kreft J."/>
            <person name="Goebel W."/>
            <person name="Chakraborty T."/>
        </authorList>
    </citation>
    <scope>NUCLEOTIDE SEQUENCE [LARGE SCALE GENOMIC DNA]</scope>
    <source>
        <strain>ATCC 35897 / DSM 20650 / CCUG 15529 / CIP 8149 / NCTC 11857 / SLCC 5334 / V8</strain>
    </source>
</reference>
<feature type="chain" id="PRO_0000301052" description="Peptide deformylase">
    <location>
        <begin position="1"/>
        <end position="183"/>
    </location>
</feature>
<feature type="active site" evidence="1">
    <location>
        <position position="154"/>
    </location>
</feature>
<feature type="binding site" evidence="1">
    <location>
        <position position="110"/>
    </location>
    <ligand>
        <name>Fe cation</name>
        <dbReference type="ChEBI" id="CHEBI:24875"/>
    </ligand>
</feature>
<feature type="binding site" evidence="1">
    <location>
        <position position="153"/>
    </location>
    <ligand>
        <name>Fe cation</name>
        <dbReference type="ChEBI" id="CHEBI:24875"/>
    </ligand>
</feature>
<feature type="binding site" evidence="1">
    <location>
        <position position="157"/>
    </location>
    <ligand>
        <name>Fe cation</name>
        <dbReference type="ChEBI" id="CHEBI:24875"/>
    </ligand>
</feature>
<evidence type="ECO:0000255" key="1">
    <source>
        <dbReference type="HAMAP-Rule" id="MF_00163"/>
    </source>
</evidence>